<reference key="1">
    <citation type="journal article" date="2005" name="J. Bacteriol.">
        <title>Whole-genome sequence analysis of Pseudomonas syringae pv. phaseolicola 1448A reveals divergence among pathovars in genes involved in virulence and transposition.</title>
        <authorList>
            <person name="Joardar V."/>
            <person name="Lindeberg M."/>
            <person name="Jackson R.W."/>
            <person name="Selengut J."/>
            <person name="Dodson R."/>
            <person name="Brinkac L.M."/>
            <person name="Daugherty S.C."/>
            <person name="DeBoy R.T."/>
            <person name="Durkin A.S."/>
            <person name="Gwinn Giglio M."/>
            <person name="Madupu R."/>
            <person name="Nelson W.C."/>
            <person name="Rosovitz M.J."/>
            <person name="Sullivan S.A."/>
            <person name="Crabtree J."/>
            <person name="Creasy T."/>
            <person name="Davidsen T.M."/>
            <person name="Haft D.H."/>
            <person name="Zafar N."/>
            <person name="Zhou L."/>
            <person name="Halpin R."/>
            <person name="Holley T."/>
            <person name="Khouri H.M."/>
            <person name="Feldblyum T.V."/>
            <person name="White O."/>
            <person name="Fraser C.M."/>
            <person name="Chatterjee A.K."/>
            <person name="Cartinhour S."/>
            <person name="Schneider D."/>
            <person name="Mansfield J.W."/>
            <person name="Collmer A."/>
            <person name="Buell R."/>
        </authorList>
    </citation>
    <scope>NUCLEOTIDE SEQUENCE [LARGE SCALE GENOMIC DNA]</scope>
    <source>
        <strain>1448A / Race 6</strain>
    </source>
</reference>
<dbReference type="EMBL" id="CP000058">
    <property type="protein sequence ID" value="AAZ34739.1"/>
    <property type="molecule type" value="Genomic_DNA"/>
</dbReference>
<dbReference type="RefSeq" id="WP_004658293.1">
    <property type="nucleotide sequence ID" value="NC_005773.3"/>
</dbReference>
<dbReference type="SMR" id="Q48D51"/>
<dbReference type="KEGG" id="psp:PSPPH_4577"/>
<dbReference type="eggNOG" id="COG0097">
    <property type="taxonomic scope" value="Bacteria"/>
</dbReference>
<dbReference type="HOGENOM" id="CLU_065464_1_2_6"/>
<dbReference type="Proteomes" id="UP000000551">
    <property type="component" value="Chromosome"/>
</dbReference>
<dbReference type="GO" id="GO:0022625">
    <property type="term" value="C:cytosolic large ribosomal subunit"/>
    <property type="evidence" value="ECO:0007669"/>
    <property type="project" value="TreeGrafter"/>
</dbReference>
<dbReference type="GO" id="GO:0019843">
    <property type="term" value="F:rRNA binding"/>
    <property type="evidence" value="ECO:0007669"/>
    <property type="project" value="UniProtKB-UniRule"/>
</dbReference>
<dbReference type="GO" id="GO:0003735">
    <property type="term" value="F:structural constituent of ribosome"/>
    <property type="evidence" value="ECO:0007669"/>
    <property type="project" value="InterPro"/>
</dbReference>
<dbReference type="GO" id="GO:0002181">
    <property type="term" value="P:cytoplasmic translation"/>
    <property type="evidence" value="ECO:0007669"/>
    <property type="project" value="TreeGrafter"/>
</dbReference>
<dbReference type="FunFam" id="3.90.930.12:FF:000001">
    <property type="entry name" value="50S ribosomal protein L6"/>
    <property type="match status" value="1"/>
</dbReference>
<dbReference type="FunFam" id="3.90.930.12:FF:000002">
    <property type="entry name" value="50S ribosomal protein L6"/>
    <property type="match status" value="1"/>
</dbReference>
<dbReference type="Gene3D" id="3.90.930.12">
    <property type="entry name" value="Ribosomal protein L6, alpha-beta domain"/>
    <property type="match status" value="2"/>
</dbReference>
<dbReference type="HAMAP" id="MF_01365_B">
    <property type="entry name" value="Ribosomal_uL6_B"/>
    <property type="match status" value="1"/>
</dbReference>
<dbReference type="InterPro" id="IPR000702">
    <property type="entry name" value="Ribosomal_uL6-like"/>
</dbReference>
<dbReference type="InterPro" id="IPR036789">
    <property type="entry name" value="Ribosomal_uL6-like_a/b-dom_sf"/>
</dbReference>
<dbReference type="InterPro" id="IPR020040">
    <property type="entry name" value="Ribosomal_uL6_a/b-dom"/>
</dbReference>
<dbReference type="InterPro" id="IPR019906">
    <property type="entry name" value="Ribosomal_uL6_bac-type"/>
</dbReference>
<dbReference type="InterPro" id="IPR002358">
    <property type="entry name" value="Ribosomal_uL6_CS"/>
</dbReference>
<dbReference type="NCBIfam" id="TIGR03654">
    <property type="entry name" value="L6_bact"/>
    <property type="match status" value="1"/>
</dbReference>
<dbReference type="PANTHER" id="PTHR11655">
    <property type="entry name" value="60S/50S RIBOSOMAL PROTEIN L6/L9"/>
    <property type="match status" value="1"/>
</dbReference>
<dbReference type="PANTHER" id="PTHR11655:SF14">
    <property type="entry name" value="LARGE RIBOSOMAL SUBUNIT PROTEIN UL6M"/>
    <property type="match status" value="1"/>
</dbReference>
<dbReference type="Pfam" id="PF00347">
    <property type="entry name" value="Ribosomal_L6"/>
    <property type="match status" value="2"/>
</dbReference>
<dbReference type="PIRSF" id="PIRSF002162">
    <property type="entry name" value="Ribosomal_L6"/>
    <property type="match status" value="1"/>
</dbReference>
<dbReference type="PRINTS" id="PR00059">
    <property type="entry name" value="RIBOSOMALL6"/>
</dbReference>
<dbReference type="SUPFAM" id="SSF56053">
    <property type="entry name" value="Ribosomal protein L6"/>
    <property type="match status" value="2"/>
</dbReference>
<dbReference type="PROSITE" id="PS00525">
    <property type="entry name" value="RIBOSOMAL_L6_1"/>
    <property type="match status" value="1"/>
</dbReference>
<sequence length="179" mass="19518">MSRVAKNPVKLPSGVEVKLVGQLLSVKGPKGTLELIIHSSVEVEIVEEAGELRFAARNGDQQTRAMAGTTRALVNNMVQGVSQGFERKLQLVGVGYKAQAKGTVLNLALGFSHPVDYELPNGITAETPSQTDILIRGIDKQLVGQVAAEIRDFRRPEPYKGKGVRYADEVVRRKEAKKK</sequence>
<evidence type="ECO:0000255" key="1">
    <source>
        <dbReference type="HAMAP-Rule" id="MF_01365"/>
    </source>
</evidence>
<evidence type="ECO:0000305" key="2"/>
<protein>
    <recommendedName>
        <fullName evidence="1">Large ribosomal subunit protein uL6</fullName>
    </recommendedName>
    <alternativeName>
        <fullName evidence="2">50S ribosomal protein L6</fullName>
    </alternativeName>
</protein>
<gene>
    <name evidence="1" type="primary">rplF</name>
    <name type="ordered locus">PSPPH_4577</name>
</gene>
<organism>
    <name type="scientific">Pseudomonas savastanoi pv. phaseolicola (strain 1448A / Race 6)</name>
    <name type="common">Pseudomonas syringae pv. phaseolicola (strain 1448A / Race 6)</name>
    <dbReference type="NCBI Taxonomy" id="264730"/>
    <lineage>
        <taxon>Bacteria</taxon>
        <taxon>Pseudomonadati</taxon>
        <taxon>Pseudomonadota</taxon>
        <taxon>Gammaproteobacteria</taxon>
        <taxon>Pseudomonadales</taxon>
        <taxon>Pseudomonadaceae</taxon>
        <taxon>Pseudomonas</taxon>
    </lineage>
</organism>
<accession>Q48D51</accession>
<comment type="function">
    <text evidence="1">This protein binds to the 23S rRNA, and is important in its secondary structure. It is located near the subunit interface in the base of the L7/L12 stalk, and near the tRNA binding site of the peptidyltransferase center.</text>
</comment>
<comment type="subunit">
    <text evidence="1">Part of the 50S ribosomal subunit.</text>
</comment>
<comment type="similarity">
    <text evidence="1">Belongs to the universal ribosomal protein uL6 family.</text>
</comment>
<keyword id="KW-0687">Ribonucleoprotein</keyword>
<keyword id="KW-0689">Ribosomal protein</keyword>
<keyword id="KW-0694">RNA-binding</keyword>
<keyword id="KW-0699">rRNA-binding</keyword>
<proteinExistence type="inferred from homology"/>
<feature type="chain" id="PRO_0000265277" description="Large ribosomal subunit protein uL6">
    <location>
        <begin position="1"/>
        <end position="179"/>
    </location>
</feature>
<name>RL6_PSE14</name>